<proteinExistence type="evidence at protein level"/>
<evidence type="ECO:0000250" key="1">
    <source>
        <dbReference type="UniProtKB" id="O43488"/>
    </source>
</evidence>
<evidence type="ECO:0000250" key="2">
    <source>
        <dbReference type="UniProtKB" id="Q8CG76"/>
    </source>
</evidence>
<evidence type="ECO:0000269" key="3">
    <source>
    </source>
</evidence>
<evidence type="ECO:0000303" key="4">
    <source>
    </source>
</evidence>
<evidence type="ECO:0000305" key="5"/>
<gene>
    <name evidence="4" type="primary">AKR</name>
</gene>
<feature type="chain" id="PRO_0000461460" description="7-acetyl-epi-neemfruitin B aldo-keto reductase">
    <location>
        <begin position="1"/>
        <end position="320"/>
    </location>
</feature>
<feature type="active site" description="Proton donor" evidence="2">
    <location>
        <position position="56"/>
    </location>
</feature>
<feature type="binding site" evidence="1">
    <location>
        <position position="51"/>
    </location>
    <ligand>
        <name>NADP(+)</name>
        <dbReference type="ChEBI" id="CHEBI:58349"/>
    </ligand>
</feature>
<feature type="binding site" evidence="1">
    <location>
        <position position="186"/>
    </location>
    <ligand>
        <name>NADP(+)</name>
        <dbReference type="ChEBI" id="CHEBI:58349"/>
    </ligand>
</feature>
<feature type="binding site" evidence="1">
    <location>
        <begin position="264"/>
        <end position="272"/>
    </location>
    <ligand>
        <name>NADP(+)</name>
        <dbReference type="ChEBI" id="CHEBI:58349"/>
    </ligand>
</feature>
<accession>P0DXH7</accession>
<protein>
    <recommendedName>
        <fullName evidence="4">7-acetyl-epi-neemfruitin B aldo-keto reductase</fullName>
        <shortName evidence="4">MaAKR</shortName>
        <ecNumber evidence="3">1.1.1.-</ecNumber>
    </recommendedName>
</protein>
<organism>
    <name type="scientific">Melia azedarach</name>
    <name type="common">Chinaberry tree</name>
    <dbReference type="NCBI Taxonomy" id="155640"/>
    <lineage>
        <taxon>Eukaryota</taxon>
        <taxon>Viridiplantae</taxon>
        <taxon>Streptophyta</taxon>
        <taxon>Embryophyta</taxon>
        <taxon>Tracheophyta</taxon>
        <taxon>Spermatophyta</taxon>
        <taxon>Magnoliopsida</taxon>
        <taxon>eudicotyledons</taxon>
        <taxon>Gunneridae</taxon>
        <taxon>Pentapetalae</taxon>
        <taxon>rosids</taxon>
        <taxon>malvids</taxon>
        <taxon>Sapindales</taxon>
        <taxon>Meliaceae</taxon>
        <taxon>Melia</taxon>
    </lineage>
</organism>
<keyword id="KW-0521">NADP</keyword>
<keyword id="KW-0560">Oxidoreductase</keyword>
<comment type="function">
    <text evidence="3">Aldo-keto reductase involved in the biosynthesis of limonoids triterpene natural products such as azadirachtin, an antifeedant widely used as bioinsecticide, and possessing many medicinal applications including anti-tumoral, anti-malarial, anti-rheumatic, antibacterial, anti-inflammatory, anti-pyretic and diuretic effects (PubMed:36701471). Can use 7-acetyl-epi-neemfruitin B as substrate (PubMed:36701471).</text>
</comment>
<comment type="catalytic activity">
    <reaction evidence="3">
        <text>7-acetyl-epi-neemfruitin B + AH2 + H2O = (1S,3bR,4R,5aR,9aR,9bR,11aS)-1-[(4R)-5-[(2S)-3,3-dimethyloxiran-2-yl]-1,4-dihydroxybutan-2-yl]-3b,6,6,9a,11a-pentamethyl-7-oxo-1H,2H,3bH,4H,5H,5aH,6H,7H,9aH,9bH,10H,11H,11aH-cyclopenta[a]phenanthren-4-yl acetate + acetate + A + H(+)</text>
        <dbReference type="Rhea" id="RHEA:80343"/>
        <dbReference type="ChEBI" id="CHEBI:13193"/>
        <dbReference type="ChEBI" id="CHEBI:15377"/>
        <dbReference type="ChEBI" id="CHEBI:15378"/>
        <dbReference type="ChEBI" id="CHEBI:17499"/>
        <dbReference type="ChEBI" id="CHEBI:30089"/>
        <dbReference type="ChEBI" id="CHEBI:231469"/>
        <dbReference type="ChEBI" id="CHEBI:231471"/>
    </reaction>
    <physiologicalReaction direction="left-to-right" evidence="3">
        <dbReference type="Rhea" id="RHEA:80344"/>
    </physiologicalReaction>
</comment>
<comment type="pathway">
    <text evidence="3">Secondary metabolite biosynthesis; terpenoid biosynthesis.</text>
</comment>
<comment type="tissue specificity">
    <text evidence="3">Mainly expressed in petioles and, to a lower extent, in roots.</text>
</comment>
<comment type="similarity">
    <text evidence="5">Belongs to the aldo/keto reductase family.</text>
</comment>
<dbReference type="EC" id="1.1.1.-" evidence="3"/>
<dbReference type="EMBL" id="OP947602">
    <property type="protein sequence ID" value="WBW48727.1"/>
    <property type="molecule type" value="mRNA"/>
</dbReference>
<dbReference type="SMR" id="P0DXH7"/>
<dbReference type="UniPathway" id="UPA00213"/>
<dbReference type="GO" id="GO:0016616">
    <property type="term" value="F:oxidoreductase activity, acting on the CH-OH group of donors, NAD or NADP as acceptor"/>
    <property type="evidence" value="ECO:0007669"/>
    <property type="project" value="InterPro"/>
</dbReference>
<dbReference type="CDD" id="cd19124">
    <property type="entry name" value="AKR_AKR4A_4B"/>
    <property type="match status" value="1"/>
</dbReference>
<dbReference type="FunFam" id="3.20.20.100:FF:000014">
    <property type="entry name" value="NAD(P)-linked oxidoreductase superfamily protein"/>
    <property type="match status" value="1"/>
</dbReference>
<dbReference type="Gene3D" id="3.20.20.100">
    <property type="entry name" value="NADP-dependent oxidoreductase domain"/>
    <property type="match status" value="1"/>
</dbReference>
<dbReference type="InterPro" id="IPR020471">
    <property type="entry name" value="AKR"/>
</dbReference>
<dbReference type="InterPro" id="IPR044497">
    <property type="entry name" value="AKR4A/B"/>
</dbReference>
<dbReference type="InterPro" id="IPR018170">
    <property type="entry name" value="Aldo/ket_reductase_CS"/>
</dbReference>
<dbReference type="InterPro" id="IPR023210">
    <property type="entry name" value="NADP_OxRdtase_dom"/>
</dbReference>
<dbReference type="InterPro" id="IPR036812">
    <property type="entry name" value="NADP_OxRdtase_dom_sf"/>
</dbReference>
<dbReference type="PANTHER" id="PTHR11732">
    <property type="entry name" value="ALDO/KETO REDUCTASE"/>
    <property type="match status" value="1"/>
</dbReference>
<dbReference type="Pfam" id="PF00248">
    <property type="entry name" value="Aldo_ket_red"/>
    <property type="match status" value="1"/>
</dbReference>
<dbReference type="PIRSF" id="PIRSF000097">
    <property type="entry name" value="AKR"/>
    <property type="match status" value="1"/>
</dbReference>
<dbReference type="PRINTS" id="PR00069">
    <property type="entry name" value="ALDKETRDTASE"/>
</dbReference>
<dbReference type="SUPFAM" id="SSF51430">
    <property type="entry name" value="NAD(P)-linked oxidoreductase"/>
    <property type="match status" value="1"/>
</dbReference>
<dbReference type="PROSITE" id="PS00798">
    <property type="entry name" value="ALDOKETO_REDUCTASE_1"/>
    <property type="match status" value="1"/>
</dbReference>
<dbReference type="PROSITE" id="PS00062">
    <property type="entry name" value="ALDOKETO_REDUCTASE_2"/>
    <property type="match status" value="1"/>
</dbReference>
<dbReference type="PROSITE" id="PS00063">
    <property type="entry name" value="ALDOKETO_REDUCTASE_3"/>
    <property type="match status" value="1"/>
</dbReference>
<sequence>MAKTVSIPSVTLGSTGITMPLVGFGTVEYPLCEWFKDAVLHAIKLGYRHFDTASTYPSEQPLGEAITEALRLGLIKSRDELFITSKLWLTDSFPDRVIPALKKSLKNMGLEYLDCYLIHFPVCLIPEATYPVKKEDIRPMDFEGVWAAMEECQKLGLTKTIGVSNFTAKKLERILATAKILPAVNQVEMNPVWQQKKLRQFCEEKGIHFSAFSPLGAVGTDWGHNRVMECEVLKEIAKAKGKSLAQIAIRWVYQQGVSVITKSFNKQRMEENLDIFDWKLTPEELHKIDQIPQYRGSRGETFVSENGPYKTLEEMWDGEI</sequence>
<name>AKR_MELAZ</name>
<reference key="1">
    <citation type="journal article" date="2023" name="Science">
        <title>Complex scaffold remodeling in plant triterpene biosynthesis.</title>
        <authorList>
            <person name="De La Pena R."/>
            <person name="Hodgson H."/>
            <person name="Liu J.C."/>
            <person name="Stephenson M.J."/>
            <person name="Martin A.C."/>
            <person name="Owen C."/>
            <person name="Harkess A."/>
            <person name="Leebens-Mack J."/>
            <person name="Jimenez L.E."/>
            <person name="Osbourn A."/>
            <person name="Sattely E.S."/>
        </authorList>
    </citation>
    <scope>NUCLEOTIDE SEQUENCE [MRNA]</scope>
    <scope>FUNCTION</scope>
    <scope>CATALYTIC ACTIVITY</scope>
    <scope>PATHWAY</scope>
    <scope>TISSUE SPECIFICITY</scope>
    <source>
        <strain>cv. Valencia</strain>
    </source>
</reference>